<organism>
    <name type="scientific">Streptococcus agalactiae serotype Ia (strain ATCC 27591 / A909 / CDC SS700)</name>
    <dbReference type="NCBI Taxonomy" id="205921"/>
    <lineage>
        <taxon>Bacteria</taxon>
        <taxon>Bacillati</taxon>
        <taxon>Bacillota</taxon>
        <taxon>Bacilli</taxon>
        <taxon>Lactobacillales</taxon>
        <taxon>Streptococcaceae</taxon>
        <taxon>Streptococcus</taxon>
    </lineage>
</organism>
<accession>Q3K3Z7</accession>
<proteinExistence type="inferred from homology"/>
<dbReference type="EC" id="2.1.2.3" evidence="1"/>
<dbReference type="EC" id="3.5.4.10" evidence="1"/>
<dbReference type="EMBL" id="CP000114">
    <property type="protein sequence ID" value="ABA45457.1"/>
    <property type="molecule type" value="Genomic_DNA"/>
</dbReference>
<dbReference type="RefSeq" id="WP_000166558.1">
    <property type="nucleotide sequence ID" value="NC_007432.1"/>
</dbReference>
<dbReference type="SMR" id="Q3K3Z7"/>
<dbReference type="KEGG" id="sak:SAK_0063"/>
<dbReference type="HOGENOM" id="CLU_016316_5_2_9"/>
<dbReference type="UniPathway" id="UPA00074">
    <property type="reaction ID" value="UER00133"/>
</dbReference>
<dbReference type="UniPathway" id="UPA00074">
    <property type="reaction ID" value="UER00135"/>
</dbReference>
<dbReference type="GO" id="GO:0005829">
    <property type="term" value="C:cytosol"/>
    <property type="evidence" value="ECO:0007669"/>
    <property type="project" value="TreeGrafter"/>
</dbReference>
<dbReference type="GO" id="GO:0003937">
    <property type="term" value="F:IMP cyclohydrolase activity"/>
    <property type="evidence" value="ECO:0007669"/>
    <property type="project" value="UniProtKB-UniRule"/>
</dbReference>
<dbReference type="GO" id="GO:0004643">
    <property type="term" value="F:phosphoribosylaminoimidazolecarboxamide formyltransferase activity"/>
    <property type="evidence" value="ECO:0007669"/>
    <property type="project" value="UniProtKB-UniRule"/>
</dbReference>
<dbReference type="GO" id="GO:0006189">
    <property type="term" value="P:'de novo' IMP biosynthetic process"/>
    <property type="evidence" value="ECO:0007669"/>
    <property type="project" value="UniProtKB-UniRule"/>
</dbReference>
<dbReference type="CDD" id="cd01421">
    <property type="entry name" value="IMPCH"/>
    <property type="match status" value="1"/>
</dbReference>
<dbReference type="FunFam" id="3.40.140.20:FF:000001">
    <property type="entry name" value="Bifunctional purine biosynthesis protein PurH"/>
    <property type="match status" value="1"/>
</dbReference>
<dbReference type="FunFam" id="3.40.140.20:FF:000002">
    <property type="entry name" value="Bifunctional purine biosynthesis protein PurH"/>
    <property type="match status" value="1"/>
</dbReference>
<dbReference type="FunFam" id="3.40.50.1380:FF:000001">
    <property type="entry name" value="Bifunctional purine biosynthesis protein PurH"/>
    <property type="match status" value="1"/>
</dbReference>
<dbReference type="Gene3D" id="3.40.140.20">
    <property type="match status" value="2"/>
</dbReference>
<dbReference type="Gene3D" id="3.40.50.1380">
    <property type="entry name" value="Methylglyoxal synthase-like domain"/>
    <property type="match status" value="1"/>
</dbReference>
<dbReference type="HAMAP" id="MF_00139">
    <property type="entry name" value="PurH"/>
    <property type="match status" value="1"/>
</dbReference>
<dbReference type="InterPro" id="IPR024051">
    <property type="entry name" value="AICAR_Tfase_dup_dom_sf"/>
</dbReference>
<dbReference type="InterPro" id="IPR016193">
    <property type="entry name" value="Cytidine_deaminase-like"/>
</dbReference>
<dbReference type="InterPro" id="IPR011607">
    <property type="entry name" value="MGS-like_dom"/>
</dbReference>
<dbReference type="InterPro" id="IPR036914">
    <property type="entry name" value="MGS-like_dom_sf"/>
</dbReference>
<dbReference type="InterPro" id="IPR002695">
    <property type="entry name" value="PurH-like"/>
</dbReference>
<dbReference type="NCBIfam" id="NF002049">
    <property type="entry name" value="PRK00881.1"/>
    <property type="match status" value="1"/>
</dbReference>
<dbReference type="NCBIfam" id="TIGR00355">
    <property type="entry name" value="purH"/>
    <property type="match status" value="1"/>
</dbReference>
<dbReference type="PANTHER" id="PTHR11692:SF0">
    <property type="entry name" value="BIFUNCTIONAL PURINE BIOSYNTHESIS PROTEIN ATIC"/>
    <property type="match status" value="1"/>
</dbReference>
<dbReference type="PANTHER" id="PTHR11692">
    <property type="entry name" value="BIFUNCTIONAL PURINE BIOSYNTHESIS PROTEIN PURH"/>
    <property type="match status" value="1"/>
</dbReference>
<dbReference type="Pfam" id="PF01808">
    <property type="entry name" value="AICARFT_IMPCHas"/>
    <property type="match status" value="1"/>
</dbReference>
<dbReference type="Pfam" id="PF02142">
    <property type="entry name" value="MGS"/>
    <property type="match status" value="1"/>
</dbReference>
<dbReference type="PIRSF" id="PIRSF000414">
    <property type="entry name" value="AICARFT_IMPCHas"/>
    <property type="match status" value="1"/>
</dbReference>
<dbReference type="SMART" id="SM00798">
    <property type="entry name" value="AICARFT_IMPCHas"/>
    <property type="match status" value="1"/>
</dbReference>
<dbReference type="SMART" id="SM00851">
    <property type="entry name" value="MGS"/>
    <property type="match status" value="1"/>
</dbReference>
<dbReference type="SUPFAM" id="SSF53927">
    <property type="entry name" value="Cytidine deaminase-like"/>
    <property type="match status" value="1"/>
</dbReference>
<dbReference type="SUPFAM" id="SSF52335">
    <property type="entry name" value="Methylglyoxal synthase-like"/>
    <property type="match status" value="1"/>
</dbReference>
<dbReference type="PROSITE" id="PS51855">
    <property type="entry name" value="MGS"/>
    <property type="match status" value="1"/>
</dbReference>
<reference key="1">
    <citation type="journal article" date="2005" name="Proc. Natl. Acad. Sci. U.S.A.">
        <title>Genome analysis of multiple pathogenic isolates of Streptococcus agalactiae: implications for the microbial 'pan-genome'.</title>
        <authorList>
            <person name="Tettelin H."/>
            <person name="Masignani V."/>
            <person name="Cieslewicz M.J."/>
            <person name="Donati C."/>
            <person name="Medini D."/>
            <person name="Ward N.L."/>
            <person name="Angiuoli S.V."/>
            <person name="Crabtree J."/>
            <person name="Jones A.L."/>
            <person name="Durkin A.S."/>
            <person name="DeBoy R.T."/>
            <person name="Davidsen T.M."/>
            <person name="Mora M."/>
            <person name="Scarselli M."/>
            <person name="Margarit y Ros I."/>
            <person name="Peterson J.D."/>
            <person name="Hauser C.R."/>
            <person name="Sundaram J.P."/>
            <person name="Nelson W.C."/>
            <person name="Madupu R."/>
            <person name="Brinkac L.M."/>
            <person name="Dodson R.J."/>
            <person name="Rosovitz M.J."/>
            <person name="Sullivan S.A."/>
            <person name="Daugherty S.C."/>
            <person name="Haft D.H."/>
            <person name="Selengut J."/>
            <person name="Gwinn M.L."/>
            <person name="Zhou L."/>
            <person name="Zafar N."/>
            <person name="Khouri H."/>
            <person name="Radune D."/>
            <person name="Dimitrov G."/>
            <person name="Watkins K."/>
            <person name="O'Connor K.J."/>
            <person name="Smith S."/>
            <person name="Utterback T.R."/>
            <person name="White O."/>
            <person name="Rubens C.E."/>
            <person name="Grandi G."/>
            <person name="Madoff L.C."/>
            <person name="Kasper D.L."/>
            <person name="Telford J.L."/>
            <person name="Wessels M.R."/>
            <person name="Rappuoli R."/>
            <person name="Fraser C.M."/>
        </authorList>
    </citation>
    <scope>NUCLEOTIDE SEQUENCE [LARGE SCALE GENOMIC DNA]</scope>
    <source>
        <strain>ATCC 27591 / A909 / CDC SS700</strain>
    </source>
</reference>
<name>PUR9_STRA1</name>
<gene>
    <name evidence="1" type="primary">purH</name>
    <name type="ordered locus">SAK_0063</name>
</gene>
<protein>
    <recommendedName>
        <fullName evidence="1">Bifunctional purine biosynthesis protein PurH</fullName>
    </recommendedName>
    <domain>
        <recommendedName>
            <fullName evidence="1">Phosphoribosylaminoimidazolecarboxamide formyltransferase</fullName>
            <ecNumber evidence="1">2.1.2.3</ecNumber>
        </recommendedName>
        <alternativeName>
            <fullName evidence="1">AICAR transformylase</fullName>
        </alternativeName>
    </domain>
    <domain>
        <recommendedName>
            <fullName evidence="1">IMP cyclohydrolase</fullName>
            <ecNumber evidence="1">3.5.4.10</ecNumber>
        </recommendedName>
        <alternativeName>
            <fullName evidence="1">ATIC</fullName>
        </alternativeName>
        <alternativeName>
            <fullName evidence="1">IMP synthase</fullName>
        </alternativeName>
        <alternativeName>
            <fullName evidence="1">Inosinicase</fullName>
        </alternativeName>
    </domain>
</protein>
<sequence>MTKRALISVSDKSGIVDFAKELKNLGWDIISTGGTKVSLDDAGVETIAIDDVTGFPEMMDGRVKTLHPNIHGGLLARRDADSHLQAAKDNNIELIDLVVVNLYPFKETILRPDVTYDLAVENIDIGGPSMLRSAAKNHASVTVVVDPADYATVLGELADASQTTFKTRQRLAAKAFRHTAAYDALIAEYFTAQVGEAKPEKLTITYDLKQAMRYGENPQQDADFYQKALPTDYSIASAKQLNGKELSFNNIRDADAAIRIIRDFKASPTVVALKHMNPCGIGQADDIETAWDYAYEADPVSIFGGIVVLNREVDAATAGKMHPIFLEIIIAPSYSEEALAILTNKKKNLRILELPFDAQAASEVEAEYTGVVGGLLVQNQDVVAENPSDWQVVTDRQPTEQEATALEFAWKAIKYVKSNGIIITNDHMTLGLGAGQTNRVGSVKIAIEQAKDHLDGAVLASDAFFPFADNIEEIAAAGIKAIIQPGGSVRDQESIDAANKHGLTMIFTGVRHFRH</sequence>
<evidence type="ECO:0000255" key="1">
    <source>
        <dbReference type="HAMAP-Rule" id="MF_00139"/>
    </source>
</evidence>
<evidence type="ECO:0000255" key="2">
    <source>
        <dbReference type="PROSITE-ProRule" id="PRU01202"/>
    </source>
</evidence>
<keyword id="KW-0378">Hydrolase</keyword>
<keyword id="KW-0511">Multifunctional enzyme</keyword>
<keyword id="KW-0658">Purine biosynthesis</keyword>
<keyword id="KW-0808">Transferase</keyword>
<feature type="chain" id="PRO_1000018966" description="Bifunctional purine biosynthesis protein PurH">
    <location>
        <begin position="1"/>
        <end position="515"/>
    </location>
</feature>
<feature type="domain" description="MGS-like" evidence="2">
    <location>
        <begin position="1"/>
        <end position="145"/>
    </location>
</feature>
<comment type="catalytic activity">
    <reaction evidence="1">
        <text>(6R)-10-formyltetrahydrofolate + 5-amino-1-(5-phospho-beta-D-ribosyl)imidazole-4-carboxamide = 5-formamido-1-(5-phospho-D-ribosyl)imidazole-4-carboxamide + (6S)-5,6,7,8-tetrahydrofolate</text>
        <dbReference type="Rhea" id="RHEA:22192"/>
        <dbReference type="ChEBI" id="CHEBI:57453"/>
        <dbReference type="ChEBI" id="CHEBI:58467"/>
        <dbReference type="ChEBI" id="CHEBI:58475"/>
        <dbReference type="ChEBI" id="CHEBI:195366"/>
        <dbReference type="EC" id="2.1.2.3"/>
    </reaction>
</comment>
<comment type="catalytic activity">
    <reaction evidence="1">
        <text>IMP + H2O = 5-formamido-1-(5-phospho-D-ribosyl)imidazole-4-carboxamide</text>
        <dbReference type="Rhea" id="RHEA:18445"/>
        <dbReference type="ChEBI" id="CHEBI:15377"/>
        <dbReference type="ChEBI" id="CHEBI:58053"/>
        <dbReference type="ChEBI" id="CHEBI:58467"/>
        <dbReference type="EC" id="3.5.4.10"/>
    </reaction>
</comment>
<comment type="pathway">
    <text evidence="1">Purine metabolism; IMP biosynthesis via de novo pathway; 5-formamido-1-(5-phospho-D-ribosyl)imidazole-4-carboxamide from 5-amino-1-(5-phospho-D-ribosyl)imidazole-4-carboxamide (10-formyl THF route): step 1/1.</text>
</comment>
<comment type="pathway">
    <text evidence="1">Purine metabolism; IMP biosynthesis via de novo pathway; IMP from 5-formamido-1-(5-phospho-D-ribosyl)imidazole-4-carboxamide: step 1/1.</text>
</comment>
<comment type="domain">
    <text evidence="1">The IMP cyclohydrolase activity resides in the N-terminal region.</text>
</comment>
<comment type="similarity">
    <text evidence="1">Belongs to the PurH family.</text>
</comment>